<accession>P31815</accession>
<name>RPO5_THECE</name>
<organism>
    <name type="scientific">Thermococcus celer</name>
    <dbReference type="NCBI Taxonomy" id="2264"/>
    <lineage>
        <taxon>Archaea</taxon>
        <taxon>Methanobacteriati</taxon>
        <taxon>Methanobacteriota</taxon>
        <taxon>Thermococci</taxon>
        <taxon>Thermococcales</taxon>
        <taxon>Thermococcaceae</taxon>
        <taxon>Thermococcus</taxon>
    </lineage>
</organism>
<proteinExistence type="inferred from homology"/>
<protein>
    <recommendedName>
        <fullName evidence="1">DNA-directed RNA polymerase subunit Rpo5</fullName>
        <ecNumber evidence="1">2.7.7.6</ecNumber>
    </recommendedName>
    <alternativeName>
        <fullName evidence="1">DNA-directed RNA polymerase subunit H</fullName>
    </alternativeName>
</protein>
<evidence type="ECO:0000255" key="1">
    <source>
        <dbReference type="HAMAP-Rule" id="MF_00025"/>
    </source>
</evidence>
<gene>
    <name evidence="1" type="primary">rpo5</name>
    <name evidence="1" type="synonym">rpoH</name>
</gene>
<sequence length="82" mass="9582">MATKKEFDIFAHELVPEHRILSEEETKELLRRYRIQISQLPQIKASDPAVVALGAKPGDVLEIKRKSRTAGYYYYYRLVVED</sequence>
<keyword id="KW-0963">Cytoplasm</keyword>
<keyword id="KW-0240">DNA-directed RNA polymerase</keyword>
<keyword id="KW-0548">Nucleotidyltransferase</keyword>
<keyword id="KW-0804">Transcription</keyword>
<keyword id="KW-0808">Transferase</keyword>
<feature type="chain" id="PRO_0000146107" description="DNA-directed RNA polymerase subunit Rpo5">
    <location>
        <begin position="1"/>
        <end position="82"/>
    </location>
</feature>
<dbReference type="EC" id="2.7.7.6" evidence="1"/>
<dbReference type="EMBL" id="X67313">
    <property type="protein sequence ID" value="CAA47721.1"/>
    <property type="molecule type" value="Genomic_DNA"/>
</dbReference>
<dbReference type="EMBL" id="X59077">
    <property type="protein sequence ID" value="CAA41801.1"/>
    <property type="molecule type" value="Genomic_DNA"/>
</dbReference>
<dbReference type="PIR" id="S20107">
    <property type="entry name" value="S20107"/>
</dbReference>
<dbReference type="SMR" id="P31815"/>
<dbReference type="GO" id="GO:0005737">
    <property type="term" value="C:cytoplasm"/>
    <property type="evidence" value="ECO:0007669"/>
    <property type="project" value="UniProtKB-SubCell"/>
</dbReference>
<dbReference type="GO" id="GO:0000428">
    <property type="term" value="C:DNA-directed RNA polymerase complex"/>
    <property type="evidence" value="ECO:0007669"/>
    <property type="project" value="UniProtKB-KW"/>
</dbReference>
<dbReference type="GO" id="GO:0003677">
    <property type="term" value="F:DNA binding"/>
    <property type="evidence" value="ECO:0007669"/>
    <property type="project" value="InterPro"/>
</dbReference>
<dbReference type="GO" id="GO:0003899">
    <property type="term" value="F:DNA-directed RNA polymerase activity"/>
    <property type="evidence" value="ECO:0007669"/>
    <property type="project" value="UniProtKB-UniRule"/>
</dbReference>
<dbReference type="GO" id="GO:0006366">
    <property type="term" value="P:transcription by RNA polymerase II"/>
    <property type="evidence" value="ECO:0007669"/>
    <property type="project" value="TreeGrafter"/>
</dbReference>
<dbReference type="GO" id="GO:0006362">
    <property type="term" value="P:transcription elongation by RNA polymerase I"/>
    <property type="evidence" value="ECO:0007669"/>
    <property type="project" value="TreeGrafter"/>
</dbReference>
<dbReference type="GO" id="GO:0042797">
    <property type="term" value="P:tRNA transcription by RNA polymerase III"/>
    <property type="evidence" value="ECO:0007669"/>
    <property type="project" value="TreeGrafter"/>
</dbReference>
<dbReference type="FunFam" id="3.90.940.20:FF:000001">
    <property type="entry name" value="DNA-directed RNA polymerases I, II, and III subunit RPABC1"/>
    <property type="match status" value="1"/>
</dbReference>
<dbReference type="Gene3D" id="3.90.940.20">
    <property type="entry name" value="RPB5-like RNA polymerase subunit"/>
    <property type="match status" value="1"/>
</dbReference>
<dbReference type="HAMAP" id="MF_00025">
    <property type="entry name" value="RNApol_Rpo5_RPB5"/>
    <property type="match status" value="1"/>
</dbReference>
<dbReference type="InterPro" id="IPR014381">
    <property type="entry name" value="Arch_Rpo5/euc_Rpb5"/>
</dbReference>
<dbReference type="InterPro" id="IPR000783">
    <property type="entry name" value="RNA_pol_subH/Rpb5_C"/>
</dbReference>
<dbReference type="InterPro" id="IPR020608">
    <property type="entry name" value="RNA_pol_subH/Rpb5_CS"/>
</dbReference>
<dbReference type="InterPro" id="IPR035913">
    <property type="entry name" value="RPB5-like_sf"/>
</dbReference>
<dbReference type="NCBIfam" id="NF007129">
    <property type="entry name" value="PRK09570.1"/>
    <property type="match status" value="1"/>
</dbReference>
<dbReference type="PANTHER" id="PTHR10535">
    <property type="entry name" value="DNA-DIRECTED RNA POLYMERASES I, II, AND III SUBUNIT RPABC1"/>
    <property type="match status" value="1"/>
</dbReference>
<dbReference type="PANTHER" id="PTHR10535:SF0">
    <property type="entry name" value="DNA-DIRECTED RNA POLYMERASES I, II, AND III SUBUNIT RPABC1"/>
    <property type="match status" value="1"/>
</dbReference>
<dbReference type="Pfam" id="PF01191">
    <property type="entry name" value="RNA_pol_Rpb5_C"/>
    <property type="match status" value="1"/>
</dbReference>
<dbReference type="SUPFAM" id="SSF55287">
    <property type="entry name" value="RPB5-like RNA polymerase subunit"/>
    <property type="match status" value="1"/>
</dbReference>
<dbReference type="PROSITE" id="PS01110">
    <property type="entry name" value="RNA_POL_H_23KD"/>
    <property type="match status" value="1"/>
</dbReference>
<reference key="1">
    <citation type="journal article" date="1992" name="Nucleic Acids Res.">
        <title>Nucleotide sequence of the genes encoding the three largest subunits of the DNA-dependent RNA polymerase from the archaeum Thermococcus celer.</title>
        <authorList>
            <person name="Klenk H.-P."/>
            <person name="Schwass V."/>
            <person name="Lottspeich F."/>
            <person name="Zillig W."/>
        </authorList>
    </citation>
    <scope>NUCLEOTIDE SEQUENCE [GENOMIC DNA]</scope>
    <source>
        <strain>ATCC 35543 / DSM 2476 / JCM 8558 / Vu 13</strain>
    </source>
</reference>
<reference key="2">
    <citation type="journal article" date="1992" name="Proc. Natl. Acad. Sci. U.S.A.">
        <title>Component H of the DNA-dependent RNA polymerases of Archaea is homologous to a subunit shared by the three eucaryal nuclear RNA polymerases.</title>
        <authorList>
            <person name="Klenk H.-P."/>
            <person name="Palm P."/>
            <person name="Lottspeich F."/>
            <person name="Zillig W."/>
        </authorList>
    </citation>
    <scope>NUCLEOTIDE SEQUENCE [GENOMIC DNA]</scope>
    <source>
        <strain>ATCC 35543 / DSM 2476 / JCM 8558 / Vu 13</strain>
    </source>
</reference>
<comment type="function">
    <text evidence="1">DNA-dependent RNA polymerase (RNAP) catalyzes the transcription of DNA into RNA using the four ribonucleoside triphosphates as substrates.</text>
</comment>
<comment type="catalytic activity">
    <reaction evidence="1">
        <text>RNA(n) + a ribonucleoside 5'-triphosphate = RNA(n+1) + diphosphate</text>
        <dbReference type="Rhea" id="RHEA:21248"/>
        <dbReference type="Rhea" id="RHEA-COMP:14527"/>
        <dbReference type="Rhea" id="RHEA-COMP:17342"/>
        <dbReference type="ChEBI" id="CHEBI:33019"/>
        <dbReference type="ChEBI" id="CHEBI:61557"/>
        <dbReference type="ChEBI" id="CHEBI:140395"/>
        <dbReference type="EC" id="2.7.7.6"/>
    </reaction>
</comment>
<comment type="subunit">
    <text evidence="1">Part of the RNA polymerase complex.</text>
</comment>
<comment type="subcellular location">
    <subcellularLocation>
        <location evidence="1">Cytoplasm</location>
    </subcellularLocation>
</comment>
<comment type="similarity">
    <text evidence="1">Belongs to the archaeal Rpo5/eukaryotic RPB5 RNA polymerase subunit family.</text>
</comment>